<gene>
    <name evidence="8" type="primary">Lrch</name>
    <name evidence="7" type="ORF">CG6860</name>
</gene>
<comment type="function">
    <text evidence="4">May play a role in the stabilization of the actin-rich cell cortex during cell division.</text>
</comment>
<comment type="subcellular location">
    <subcellularLocation>
        <location evidence="4">Cytoplasm</location>
        <location evidence="4">Cytoskeleton</location>
    </subcellularLocation>
    <subcellularLocation>
        <location evidence="4">Cytoplasm</location>
        <location evidence="4">Cell cortex</location>
    </subcellularLocation>
    <subcellularLocation>
        <location evidence="4">Cleavage furrow</location>
    </subcellularLocation>
    <text evidence="4">Associated with the actin network at the onset of mitosis (PubMed:20805893). Associated with spindle microtubules in metaphase (PubMed:20805893).</text>
</comment>
<comment type="developmental stage">
    <text evidence="4">There is a maternal contribution to the expression during the early stages of embryogenesis (PubMed:20805893). Zygotic expression is ubiquitous but reinforced in several embryonic tissues (PubMed:20805893). From stage 11 to 12, accumulates in the developing tracheal system, then in subsets of cells composing the central nervous system (PubMed:20805893). Finally, from stage-15, it is also strongly expressed in the gonads (PubMed:20805893).</text>
</comment>
<comment type="disruption phenotype">
    <text evidence="4">Embryos homozygous for a null allele of the gene are viable and do not display gross developmental defects, developing to adult stage, albeit with a slightly decreased viability (PubMed:20805893). Homozygous females are sterile, laying rare embryos that display no sign of development (PubMed:20805893). Mutant flies display increased lethality at extreme temperatures (PubMed:20805893).</text>
</comment>
<protein>
    <recommendedName>
        <fullName evidence="6">Leucine-rich repeat and calponin homology domain-containing protein</fullName>
        <shortName evidence="5">dLRCH</shortName>
    </recommendedName>
</protein>
<evidence type="ECO:0000255" key="1"/>
<evidence type="ECO:0000255" key="2">
    <source>
        <dbReference type="PROSITE-ProRule" id="PRU00044"/>
    </source>
</evidence>
<evidence type="ECO:0000256" key="3">
    <source>
        <dbReference type="SAM" id="MobiDB-lite"/>
    </source>
</evidence>
<evidence type="ECO:0000269" key="4">
    <source>
    </source>
</evidence>
<evidence type="ECO:0000303" key="5">
    <source>
    </source>
</evidence>
<evidence type="ECO:0000305" key="6"/>
<evidence type="ECO:0000312" key="7">
    <source>
        <dbReference type="EMBL" id="AAK93550.1"/>
    </source>
</evidence>
<evidence type="ECO:0000312" key="8">
    <source>
        <dbReference type="FlyBase" id="FBgn0032633"/>
    </source>
</evidence>
<proteinExistence type="evidence at transcript level"/>
<accession>Q960C5</accession>
<feature type="chain" id="PRO_0000447859" description="Leucine-rich repeat and calponin homology domain-containing protein">
    <location>
        <begin position="1"/>
        <end position="809"/>
    </location>
</feature>
<feature type="repeat" description="LRR 1" evidence="1">
    <location>
        <begin position="72"/>
        <end position="96"/>
    </location>
</feature>
<feature type="repeat" description="LRR 2" evidence="1">
    <location>
        <begin position="98"/>
        <end position="121"/>
    </location>
</feature>
<feature type="repeat" description="LRR 3" evidence="1">
    <location>
        <begin position="122"/>
        <end position="144"/>
    </location>
</feature>
<feature type="repeat" description="LRR 4" evidence="1">
    <location>
        <begin position="145"/>
        <end position="168"/>
    </location>
</feature>
<feature type="repeat" description="LRR 5" evidence="1">
    <location>
        <begin position="170"/>
        <end position="189"/>
    </location>
</feature>
<feature type="repeat" description="LRR 6" evidence="1">
    <location>
        <begin position="191"/>
        <end position="213"/>
    </location>
</feature>
<feature type="repeat" description="LRR 7" evidence="1">
    <location>
        <begin position="214"/>
        <end position="236"/>
    </location>
</feature>
<feature type="repeat" description="LRR 8" evidence="1">
    <location>
        <begin position="238"/>
        <end position="258"/>
    </location>
</feature>
<feature type="repeat" description="LRR 9" evidence="1">
    <location>
        <begin position="260"/>
        <end position="282"/>
    </location>
</feature>
<feature type="domain" description="Calponin-homology (CH)" evidence="2">
    <location>
        <begin position="662"/>
        <end position="776"/>
    </location>
</feature>
<feature type="region of interest" description="Disordered" evidence="3">
    <location>
        <begin position="27"/>
        <end position="53"/>
    </location>
</feature>
<feature type="region of interest" description="Disordered" evidence="3">
    <location>
        <begin position="295"/>
        <end position="373"/>
    </location>
</feature>
<feature type="region of interest" description="Disordered" evidence="3">
    <location>
        <begin position="423"/>
        <end position="442"/>
    </location>
</feature>
<feature type="region of interest" description="Disordered" evidence="3">
    <location>
        <begin position="490"/>
        <end position="550"/>
    </location>
</feature>
<feature type="region of interest" description="Disordered" evidence="3">
    <location>
        <begin position="783"/>
        <end position="809"/>
    </location>
</feature>
<feature type="compositionally biased region" description="Gly residues" evidence="3">
    <location>
        <begin position="34"/>
        <end position="44"/>
    </location>
</feature>
<feature type="compositionally biased region" description="Polar residues" evidence="3">
    <location>
        <begin position="319"/>
        <end position="336"/>
    </location>
</feature>
<feature type="compositionally biased region" description="Basic and acidic residues" evidence="3">
    <location>
        <begin position="351"/>
        <end position="368"/>
    </location>
</feature>
<feature type="compositionally biased region" description="Polar residues" evidence="3">
    <location>
        <begin position="518"/>
        <end position="532"/>
    </location>
</feature>
<feature type="compositionally biased region" description="Polar residues" evidence="3">
    <location>
        <begin position="788"/>
        <end position="809"/>
    </location>
</feature>
<organism evidence="7">
    <name type="scientific">Drosophila melanogaster</name>
    <name type="common">Fruit fly</name>
    <dbReference type="NCBI Taxonomy" id="7227"/>
    <lineage>
        <taxon>Eukaryota</taxon>
        <taxon>Metazoa</taxon>
        <taxon>Ecdysozoa</taxon>
        <taxon>Arthropoda</taxon>
        <taxon>Hexapoda</taxon>
        <taxon>Insecta</taxon>
        <taxon>Pterygota</taxon>
        <taxon>Neoptera</taxon>
        <taxon>Endopterygota</taxon>
        <taxon>Diptera</taxon>
        <taxon>Brachycera</taxon>
        <taxon>Muscomorpha</taxon>
        <taxon>Ephydroidea</taxon>
        <taxon>Drosophilidae</taxon>
        <taxon>Drosophila</taxon>
        <taxon>Sophophora</taxon>
    </lineage>
</organism>
<keyword id="KW-0963">Cytoplasm</keyword>
<keyword id="KW-0206">Cytoskeleton</keyword>
<keyword id="KW-0433">Leucine-rich repeat</keyword>
<keyword id="KW-1185">Reference proteome</keyword>
<keyword id="KW-0677">Repeat</keyword>
<dbReference type="EMBL" id="AY052126">
    <property type="protein sequence ID" value="AAK93550.1"/>
    <property type="molecule type" value="mRNA"/>
</dbReference>
<dbReference type="EMBL" id="AE014134">
    <property type="protein sequence ID" value="AAN10986.1"/>
    <property type="molecule type" value="Genomic_DNA"/>
</dbReference>
<dbReference type="RefSeq" id="NP_724046.1">
    <property type="nucleotide sequence ID" value="NM_165212.2"/>
</dbReference>
<dbReference type="SMR" id="Q960C5"/>
<dbReference type="FunCoup" id="Q960C5">
    <property type="interactions" value="974"/>
</dbReference>
<dbReference type="IntAct" id="Q960C5">
    <property type="interactions" value="1"/>
</dbReference>
<dbReference type="STRING" id="7227.FBpp0080522"/>
<dbReference type="GlyGen" id="Q960C5">
    <property type="glycosylation" value="1 site"/>
</dbReference>
<dbReference type="PaxDb" id="7227-FBpp0080522"/>
<dbReference type="DNASU" id="35041"/>
<dbReference type="EnsemblMetazoa" id="FBtr0080968">
    <property type="protein sequence ID" value="FBpp0080521"/>
    <property type="gene ID" value="FBgn0032633"/>
</dbReference>
<dbReference type="GeneID" id="35041"/>
<dbReference type="KEGG" id="dme:Dmel_CG6860"/>
<dbReference type="UCSC" id="CG6860-RA">
    <property type="organism name" value="d. melanogaster"/>
</dbReference>
<dbReference type="AGR" id="FB:FBgn0032633"/>
<dbReference type="CTD" id="35041"/>
<dbReference type="FlyBase" id="FBgn0032633">
    <property type="gene designation" value="Lrch"/>
</dbReference>
<dbReference type="VEuPathDB" id="VectorBase:FBgn0032633"/>
<dbReference type="GeneTree" id="ENSGT00940000158330"/>
<dbReference type="InParanoid" id="Q960C5"/>
<dbReference type="OrthoDB" id="6149831at2759"/>
<dbReference type="SignaLink" id="Q960C5"/>
<dbReference type="BioGRID-ORCS" id="35041">
    <property type="hits" value="0 hits in 3 CRISPR screens"/>
</dbReference>
<dbReference type="GenomeRNAi" id="35041"/>
<dbReference type="PRO" id="PR:Q960C5"/>
<dbReference type="Proteomes" id="UP000000803">
    <property type="component" value="Chromosome 2L"/>
</dbReference>
<dbReference type="Bgee" id="FBgn0032633">
    <property type="expression patterns" value="Expressed in enteroblast (Drosophila) in digestive tract and 244 other cell types or tissues"/>
</dbReference>
<dbReference type="ExpressionAtlas" id="Q960C5">
    <property type="expression patterns" value="baseline and differential"/>
</dbReference>
<dbReference type="GO" id="GO:0005938">
    <property type="term" value="C:cell cortex"/>
    <property type="evidence" value="ECO:0000314"/>
    <property type="project" value="FlyBase"/>
</dbReference>
<dbReference type="GO" id="GO:0032154">
    <property type="term" value="C:cleavage furrow"/>
    <property type="evidence" value="ECO:0000314"/>
    <property type="project" value="FlyBase"/>
</dbReference>
<dbReference type="GO" id="GO:0005856">
    <property type="term" value="C:cytoskeleton"/>
    <property type="evidence" value="ECO:0007669"/>
    <property type="project" value="UniProtKB-SubCell"/>
</dbReference>
<dbReference type="GO" id="GO:0007010">
    <property type="term" value="P:cytoskeleton organization"/>
    <property type="evidence" value="ECO:0000250"/>
    <property type="project" value="FlyBase"/>
</dbReference>
<dbReference type="GO" id="GO:0035556">
    <property type="term" value="P:intracellular signal transduction"/>
    <property type="evidence" value="ECO:0000318"/>
    <property type="project" value="GO_Central"/>
</dbReference>
<dbReference type="CDD" id="cd21205">
    <property type="entry name" value="CH_LRCH"/>
    <property type="match status" value="1"/>
</dbReference>
<dbReference type="FunFam" id="3.80.10.10:FF:000510">
    <property type="entry name" value="Leucine-rich-repeats and calponin homology domain protein, isoform B"/>
    <property type="match status" value="1"/>
</dbReference>
<dbReference type="FunFam" id="1.10.418.10:FF:000081">
    <property type="entry name" value="Leucine-rich-repeats and calponin homology domain protein, isoform C"/>
    <property type="match status" value="1"/>
</dbReference>
<dbReference type="Gene3D" id="1.10.418.10">
    <property type="entry name" value="Calponin-like domain"/>
    <property type="match status" value="1"/>
</dbReference>
<dbReference type="Gene3D" id="3.80.10.10">
    <property type="entry name" value="Ribonuclease Inhibitor"/>
    <property type="match status" value="1"/>
</dbReference>
<dbReference type="InterPro" id="IPR001715">
    <property type="entry name" value="CH_dom"/>
</dbReference>
<dbReference type="InterPro" id="IPR036872">
    <property type="entry name" value="CH_dom_sf"/>
</dbReference>
<dbReference type="InterPro" id="IPR000595">
    <property type="entry name" value="cNMP-bd_dom"/>
</dbReference>
<dbReference type="InterPro" id="IPR001611">
    <property type="entry name" value="Leu-rich_rpt"/>
</dbReference>
<dbReference type="InterPro" id="IPR003591">
    <property type="entry name" value="Leu-rich_rpt_typical-subtyp"/>
</dbReference>
<dbReference type="InterPro" id="IPR032675">
    <property type="entry name" value="LRR_dom_sf"/>
</dbReference>
<dbReference type="InterPro" id="IPR050216">
    <property type="entry name" value="LRR_domain-containing"/>
</dbReference>
<dbReference type="PANTHER" id="PTHR48051">
    <property type="match status" value="1"/>
</dbReference>
<dbReference type="PANTHER" id="PTHR48051:SF21">
    <property type="entry name" value="CALPONIN-HOMOLOGY (CH) DOMAIN-CONTAINING PROTEIN"/>
    <property type="match status" value="1"/>
</dbReference>
<dbReference type="Pfam" id="PF00307">
    <property type="entry name" value="CH"/>
    <property type="match status" value="1"/>
</dbReference>
<dbReference type="Pfam" id="PF00560">
    <property type="entry name" value="LRR_1"/>
    <property type="match status" value="1"/>
</dbReference>
<dbReference type="Pfam" id="PF13855">
    <property type="entry name" value="LRR_8"/>
    <property type="match status" value="1"/>
</dbReference>
<dbReference type="SMART" id="SM00033">
    <property type="entry name" value="CH"/>
    <property type="match status" value="1"/>
</dbReference>
<dbReference type="SMART" id="SM00364">
    <property type="entry name" value="LRR_BAC"/>
    <property type="match status" value="5"/>
</dbReference>
<dbReference type="SMART" id="SM00369">
    <property type="entry name" value="LRR_TYP"/>
    <property type="match status" value="6"/>
</dbReference>
<dbReference type="SUPFAM" id="SSF47576">
    <property type="entry name" value="Calponin-homology domain, CH-domain"/>
    <property type="match status" value="1"/>
</dbReference>
<dbReference type="SUPFAM" id="SSF52058">
    <property type="entry name" value="L domain-like"/>
    <property type="match status" value="1"/>
</dbReference>
<dbReference type="PROSITE" id="PS50021">
    <property type="entry name" value="CH"/>
    <property type="match status" value="1"/>
</dbReference>
<dbReference type="PROSITE" id="PS50042">
    <property type="entry name" value="CNMP_BINDING_3"/>
    <property type="match status" value="1"/>
</dbReference>
<dbReference type="PROSITE" id="PS51450">
    <property type="entry name" value="LRR"/>
    <property type="match status" value="7"/>
</dbReference>
<name>LRCH_DROME</name>
<sequence>MAATVYQRLHSVAVGVGSAAGSAIGSGSASLPGSGTGSGSGIGHAGNTSSSTSSALLSHSQLTRSLERILEEAHFSGELILTNRKLKDFPRTGTKYSLTDTVIADLSRNRFAELPEEVTTFAFLETLLLYHNTIRSIPESVKQLSSLTYLDLRSNQLSSLPREICFLPLQVLLVSNNRLTSLPDELGRLDQTLTDLDASYNQLANLPARLGELRSLRSLSLRSNHLLYLPRELTCLSLISLDVSNNKIASLPLEIRHMSTLVELQLENNPLTSPPASLCMRGLVHVFKFLETQATKDEKGSRSGGNYDGYTTLRRAPRHNSSGNVLEASTTGSTNNQRRHQVDSGYNTSDGLDKRWSHDAPTKSKTDSPLHCVSNSTAATLPRTLPSAVHSQADLMDASLTSSTSTIVDESLTLSPTASPCKLSYAHSNSSSNGSSPDQDDDIMLDHQERTVHHANGRSGKGLGNIQTYKEYKEALKQQRNQEISVYKQKHPNANHSPNDDEDLSPSPPSISNGSSSNTLPKSIMKQNSNQIGHNGNGNGSANGNGVDDVVIPKKPIQKVIPSRITEIKPASTSDIRSANSSDCLGYVKPQSPMKNGTSKFNTSNGGGVQTTVGIVSSTTIKSPVSSTTKLGTVKTHRSVTWNHDIPAEKLSFTMRREFDRQREETELMSQLRTIIETRLKMTLPVDIASALTDGVILCHLANYVRPRSVASIHVPSPGVNKLTMARCRRNVDNFLEACRRIGVDENLICCAADVLEGKGAVQVAITVGELFRLHGNGGCGSGNSSGAATPTKSPTRTTRATMSPTPLA</sequence>
<reference key="1">
    <citation type="journal article" date="2000" name="Science">
        <title>The genome sequence of Drosophila melanogaster.</title>
        <authorList>
            <person name="Adams M.D."/>
            <person name="Celniker S.E."/>
            <person name="Holt R.A."/>
            <person name="Evans C.A."/>
            <person name="Gocayne J.D."/>
            <person name="Amanatides P.G."/>
            <person name="Scherer S.E."/>
            <person name="Li P.W."/>
            <person name="Hoskins R.A."/>
            <person name="Galle R.F."/>
            <person name="George R.A."/>
            <person name="Lewis S.E."/>
            <person name="Richards S."/>
            <person name="Ashburner M."/>
            <person name="Henderson S.N."/>
            <person name="Sutton G.G."/>
            <person name="Wortman J.R."/>
            <person name="Yandell M.D."/>
            <person name="Zhang Q."/>
            <person name="Chen L.X."/>
            <person name="Brandon R.C."/>
            <person name="Rogers Y.-H.C."/>
            <person name="Blazej R.G."/>
            <person name="Champe M."/>
            <person name="Pfeiffer B.D."/>
            <person name="Wan K.H."/>
            <person name="Doyle C."/>
            <person name="Baxter E.G."/>
            <person name="Helt G."/>
            <person name="Nelson C.R."/>
            <person name="Miklos G.L.G."/>
            <person name="Abril J.F."/>
            <person name="Agbayani A."/>
            <person name="An H.-J."/>
            <person name="Andrews-Pfannkoch C."/>
            <person name="Baldwin D."/>
            <person name="Ballew R.M."/>
            <person name="Basu A."/>
            <person name="Baxendale J."/>
            <person name="Bayraktaroglu L."/>
            <person name="Beasley E.M."/>
            <person name="Beeson K.Y."/>
            <person name="Benos P.V."/>
            <person name="Berman B.P."/>
            <person name="Bhandari D."/>
            <person name="Bolshakov S."/>
            <person name="Borkova D."/>
            <person name="Botchan M.R."/>
            <person name="Bouck J."/>
            <person name="Brokstein P."/>
            <person name="Brottier P."/>
            <person name="Burtis K.C."/>
            <person name="Busam D.A."/>
            <person name="Butler H."/>
            <person name="Cadieu E."/>
            <person name="Center A."/>
            <person name="Chandra I."/>
            <person name="Cherry J.M."/>
            <person name="Cawley S."/>
            <person name="Dahlke C."/>
            <person name="Davenport L.B."/>
            <person name="Davies P."/>
            <person name="de Pablos B."/>
            <person name="Delcher A."/>
            <person name="Deng Z."/>
            <person name="Mays A.D."/>
            <person name="Dew I."/>
            <person name="Dietz S.M."/>
            <person name="Dodson K."/>
            <person name="Doup L.E."/>
            <person name="Downes M."/>
            <person name="Dugan-Rocha S."/>
            <person name="Dunkov B.C."/>
            <person name="Dunn P."/>
            <person name="Durbin K.J."/>
            <person name="Evangelista C.C."/>
            <person name="Ferraz C."/>
            <person name="Ferriera S."/>
            <person name="Fleischmann W."/>
            <person name="Fosler C."/>
            <person name="Gabrielian A.E."/>
            <person name="Garg N.S."/>
            <person name="Gelbart W.M."/>
            <person name="Glasser K."/>
            <person name="Glodek A."/>
            <person name="Gong F."/>
            <person name="Gorrell J.H."/>
            <person name="Gu Z."/>
            <person name="Guan P."/>
            <person name="Harris M."/>
            <person name="Harris N.L."/>
            <person name="Harvey D.A."/>
            <person name="Heiman T.J."/>
            <person name="Hernandez J.R."/>
            <person name="Houck J."/>
            <person name="Hostin D."/>
            <person name="Houston K.A."/>
            <person name="Howland T.J."/>
            <person name="Wei M.-H."/>
            <person name="Ibegwam C."/>
            <person name="Jalali M."/>
            <person name="Kalush F."/>
            <person name="Karpen G.H."/>
            <person name="Ke Z."/>
            <person name="Kennison J.A."/>
            <person name="Ketchum K.A."/>
            <person name="Kimmel B.E."/>
            <person name="Kodira C.D."/>
            <person name="Kraft C.L."/>
            <person name="Kravitz S."/>
            <person name="Kulp D."/>
            <person name="Lai Z."/>
            <person name="Lasko P."/>
            <person name="Lei Y."/>
            <person name="Levitsky A.A."/>
            <person name="Li J.H."/>
            <person name="Li Z."/>
            <person name="Liang Y."/>
            <person name="Lin X."/>
            <person name="Liu X."/>
            <person name="Mattei B."/>
            <person name="McIntosh T.C."/>
            <person name="McLeod M.P."/>
            <person name="McPherson D."/>
            <person name="Merkulov G."/>
            <person name="Milshina N.V."/>
            <person name="Mobarry C."/>
            <person name="Morris J."/>
            <person name="Moshrefi A."/>
            <person name="Mount S.M."/>
            <person name="Moy M."/>
            <person name="Murphy B."/>
            <person name="Murphy L."/>
            <person name="Muzny D.M."/>
            <person name="Nelson D.L."/>
            <person name="Nelson D.R."/>
            <person name="Nelson K.A."/>
            <person name="Nixon K."/>
            <person name="Nusskern D.R."/>
            <person name="Pacleb J.M."/>
            <person name="Palazzolo M."/>
            <person name="Pittman G.S."/>
            <person name="Pan S."/>
            <person name="Pollard J."/>
            <person name="Puri V."/>
            <person name="Reese M.G."/>
            <person name="Reinert K."/>
            <person name="Remington K."/>
            <person name="Saunders R.D.C."/>
            <person name="Scheeler F."/>
            <person name="Shen H."/>
            <person name="Shue B.C."/>
            <person name="Siden-Kiamos I."/>
            <person name="Simpson M."/>
            <person name="Skupski M.P."/>
            <person name="Smith T.J."/>
            <person name="Spier E."/>
            <person name="Spradling A.C."/>
            <person name="Stapleton M."/>
            <person name="Strong R."/>
            <person name="Sun E."/>
            <person name="Svirskas R."/>
            <person name="Tector C."/>
            <person name="Turner R."/>
            <person name="Venter E."/>
            <person name="Wang A.H."/>
            <person name="Wang X."/>
            <person name="Wang Z.-Y."/>
            <person name="Wassarman D.A."/>
            <person name="Weinstock G.M."/>
            <person name="Weissenbach J."/>
            <person name="Williams S.M."/>
            <person name="Woodage T."/>
            <person name="Worley K.C."/>
            <person name="Wu D."/>
            <person name="Yang S."/>
            <person name="Yao Q.A."/>
            <person name="Ye J."/>
            <person name="Yeh R.-F."/>
            <person name="Zaveri J.S."/>
            <person name="Zhan M."/>
            <person name="Zhang G."/>
            <person name="Zhao Q."/>
            <person name="Zheng L."/>
            <person name="Zheng X.H."/>
            <person name="Zhong F.N."/>
            <person name="Zhong W."/>
            <person name="Zhou X."/>
            <person name="Zhu S.C."/>
            <person name="Zhu X."/>
            <person name="Smith H.O."/>
            <person name="Gibbs R.A."/>
            <person name="Myers E.W."/>
            <person name="Rubin G.M."/>
            <person name="Venter J.C."/>
        </authorList>
    </citation>
    <scope>NUCLEOTIDE SEQUENCE [LARGE SCALE GENOMIC DNA]</scope>
    <source>
        <strain>Berkeley</strain>
    </source>
</reference>
<reference key="2">
    <citation type="journal article" date="2002" name="Genome Biol.">
        <title>Annotation of the Drosophila melanogaster euchromatic genome: a systematic review.</title>
        <authorList>
            <person name="Misra S."/>
            <person name="Crosby M.A."/>
            <person name="Mungall C.J."/>
            <person name="Matthews B.B."/>
            <person name="Campbell K.S."/>
            <person name="Hradecky P."/>
            <person name="Huang Y."/>
            <person name="Kaminker J.S."/>
            <person name="Millburn G.H."/>
            <person name="Prochnik S.E."/>
            <person name="Smith C.D."/>
            <person name="Tupy J.L."/>
            <person name="Whitfield E.J."/>
            <person name="Bayraktaroglu L."/>
            <person name="Berman B.P."/>
            <person name="Bettencourt B.R."/>
            <person name="Celniker S.E."/>
            <person name="de Grey A.D.N.J."/>
            <person name="Drysdale R.A."/>
            <person name="Harris N.L."/>
            <person name="Richter J."/>
            <person name="Russo S."/>
            <person name="Schroeder A.J."/>
            <person name="Shu S.Q."/>
            <person name="Stapleton M."/>
            <person name="Yamada C."/>
            <person name="Ashburner M."/>
            <person name="Gelbart W.M."/>
            <person name="Rubin G.M."/>
            <person name="Lewis S.E."/>
        </authorList>
    </citation>
    <scope>GENOME REANNOTATION</scope>
    <source>
        <strain>Berkeley</strain>
    </source>
</reference>
<reference key="3">
    <citation type="journal article" date="2002" name="Genome Biol.">
        <title>A Drosophila full-length cDNA resource.</title>
        <authorList>
            <person name="Stapleton M."/>
            <person name="Carlson J.W."/>
            <person name="Brokstein P."/>
            <person name="Yu C."/>
            <person name="Champe M."/>
            <person name="George R.A."/>
            <person name="Guarin H."/>
            <person name="Kronmiller B."/>
            <person name="Pacleb J.M."/>
            <person name="Park S."/>
            <person name="Wan K.H."/>
            <person name="Rubin G.M."/>
            <person name="Celniker S.E."/>
        </authorList>
    </citation>
    <scope>NUCLEOTIDE SEQUENCE [LARGE SCALE MRNA]</scope>
    <source>
        <strain>Berkeley</strain>
        <tissue>Embryo</tissue>
    </source>
</reference>
<reference key="4">
    <citation type="journal article" date="2010" name="PLoS ONE">
        <title>LRCH proteins: a novel family of cytoskeletal regulators.</title>
        <authorList>
            <person name="Foussard H."/>
            <person name="Ferrer P."/>
            <person name="Valenti P."/>
            <person name="Polesello C."/>
            <person name="Carreno S."/>
            <person name="Payre F."/>
        </authorList>
    </citation>
    <scope>FUNCTION</scope>
    <scope>SUBCELLULAR LOCATION</scope>
    <scope>DEVELOPMENTAL STAGE</scope>
    <scope>DISRUPTION PHENOTYPE</scope>
</reference>